<reference key="1">
    <citation type="journal article" date="2001" name="FEMS Microbiol. Lett.">
        <title>The mtl genes and the mannitol-1-phosphate dehydrogenase from Klebsiella pneumoniae KAY2026.</title>
        <authorList>
            <person name="Otte S."/>
            <person name="Lengeler J.W."/>
        </authorList>
    </citation>
    <scope>NUCLEOTIDE SEQUENCE [GENOMIC DNA]</scope>
    <source>
        <strain>1033-5P14 / KAY2026</strain>
    </source>
</reference>
<protein>
    <recommendedName>
        <fullName>Mannitol-1-phosphate 5-dehydrogenase</fullName>
        <ecNumber>1.1.1.17</ecNumber>
    </recommendedName>
</protein>
<feature type="chain" id="PRO_0000170707" description="Mannitol-1-phosphate 5-dehydrogenase">
    <location>
        <begin position="1"/>
        <end position="382"/>
    </location>
</feature>
<feature type="binding site" evidence="1">
    <location>
        <begin position="3"/>
        <end position="14"/>
    </location>
    <ligand>
        <name>NAD(+)</name>
        <dbReference type="ChEBI" id="CHEBI:57540"/>
    </ligand>
</feature>
<name>MTLD_KLEPN</name>
<sequence>MKALHFGAGNIGRGFIGKLLADAGIELTFADVNQTVLDALNARHSYQVHVVGENEQVDTVSGVNAVSSIGDEVVDLIAEVDVVTTAVGPVALERIAPAIAKGLAQRKAQGTERPLNIIACENMVRGTTQLKGHVFNALAEEDKAWVEAHIGFVDSAVDRIVPPSASATHDPLEVTVETFSEWIVDKTQFKGALPTIPGMELTDNLMAFVERKLFTLNTGHAITAYLGKLAGHQTIRDAILDKKIRAVVQGAMEESGAVLIKRYAFDPQKHAAYIQKILGRFENPYLKDDVERVGRQPLRKLSAGDRLIKPLLGTLEYGLPHRNLVKGIAAAMHFRSEDDPQAQELAALIADKGPQAALAQISGLDAASDVVAEAVNDYNAEK</sequence>
<dbReference type="EC" id="1.1.1.17"/>
<dbReference type="EMBL" id="AF166095">
    <property type="protein sequence ID" value="AAD45386.1"/>
    <property type="molecule type" value="Genomic_DNA"/>
</dbReference>
<dbReference type="SMR" id="Q9XBM6"/>
<dbReference type="GO" id="GO:0005829">
    <property type="term" value="C:cytosol"/>
    <property type="evidence" value="ECO:0007669"/>
    <property type="project" value="TreeGrafter"/>
</dbReference>
<dbReference type="GO" id="GO:0008926">
    <property type="term" value="F:mannitol-1-phosphate 5-dehydrogenase activity"/>
    <property type="evidence" value="ECO:0007669"/>
    <property type="project" value="UniProtKB-UniRule"/>
</dbReference>
<dbReference type="GO" id="GO:0019592">
    <property type="term" value="P:mannitol catabolic process"/>
    <property type="evidence" value="ECO:0007669"/>
    <property type="project" value="TreeGrafter"/>
</dbReference>
<dbReference type="FunFam" id="1.10.1040.10:FF:000009">
    <property type="entry name" value="Mannitol-1-phosphate 5-dehydrogenase"/>
    <property type="match status" value="1"/>
</dbReference>
<dbReference type="FunFam" id="3.40.50.720:FF:000075">
    <property type="entry name" value="Mannitol-1-phosphate 5-dehydrogenase"/>
    <property type="match status" value="1"/>
</dbReference>
<dbReference type="Gene3D" id="1.10.1040.10">
    <property type="entry name" value="N-(1-d-carboxylethyl)-l-norvaline Dehydrogenase, domain 2"/>
    <property type="match status" value="1"/>
</dbReference>
<dbReference type="Gene3D" id="3.40.50.720">
    <property type="entry name" value="NAD(P)-binding Rossmann-like Domain"/>
    <property type="match status" value="1"/>
</dbReference>
<dbReference type="HAMAP" id="MF_00196">
    <property type="entry name" value="Mannitol_dehydrog"/>
    <property type="match status" value="1"/>
</dbReference>
<dbReference type="InterPro" id="IPR008927">
    <property type="entry name" value="6-PGluconate_DH-like_C_sf"/>
</dbReference>
<dbReference type="InterPro" id="IPR013328">
    <property type="entry name" value="6PGD_dom2"/>
</dbReference>
<dbReference type="InterPro" id="IPR023028">
    <property type="entry name" value="Mannitol_1_phos_5_DH"/>
</dbReference>
<dbReference type="InterPro" id="IPR000669">
    <property type="entry name" value="Mannitol_DH"/>
</dbReference>
<dbReference type="InterPro" id="IPR013118">
    <property type="entry name" value="Mannitol_DH_C"/>
</dbReference>
<dbReference type="InterPro" id="IPR023027">
    <property type="entry name" value="Mannitol_DH_CS"/>
</dbReference>
<dbReference type="InterPro" id="IPR013131">
    <property type="entry name" value="Mannitol_DH_N"/>
</dbReference>
<dbReference type="InterPro" id="IPR036291">
    <property type="entry name" value="NAD(P)-bd_dom_sf"/>
</dbReference>
<dbReference type="NCBIfam" id="NF002646">
    <property type="entry name" value="PRK02318.1-2"/>
    <property type="match status" value="1"/>
</dbReference>
<dbReference type="NCBIfam" id="NF002647">
    <property type="entry name" value="PRK02318.1-3"/>
    <property type="match status" value="1"/>
</dbReference>
<dbReference type="NCBIfam" id="NF002648">
    <property type="entry name" value="PRK02318.1-4"/>
    <property type="match status" value="1"/>
</dbReference>
<dbReference type="NCBIfam" id="NF002650">
    <property type="entry name" value="PRK02318.2-2"/>
    <property type="match status" value="1"/>
</dbReference>
<dbReference type="NCBIfam" id="NF002652">
    <property type="entry name" value="PRK02318.2-5"/>
    <property type="match status" value="1"/>
</dbReference>
<dbReference type="PANTHER" id="PTHR30524:SF0">
    <property type="entry name" value="ALTRONATE OXIDOREDUCTASE-RELATED"/>
    <property type="match status" value="1"/>
</dbReference>
<dbReference type="PANTHER" id="PTHR30524">
    <property type="entry name" value="MANNITOL-1-PHOSPHATE 5-DEHYDROGENASE"/>
    <property type="match status" value="1"/>
</dbReference>
<dbReference type="Pfam" id="PF01232">
    <property type="entry name" value="Mannitol_dh"/>
    <property type="match status" value="1"/>
</dbReference>
<dbReference type="Pfam" id="PF08125">
    <property type="entry name" value="Mannitol_dh_C"/>
    <property type="match status" value="1"/>
</dbReference>
<dbReference type="PRINTS" id="PR00084">
    <property type="entry name" value="MTLDHDRGNASE"/>
</dbReference>
<dbReference type="SUPFAM" id="SSF48179">
    <property type="entry name" value="6-phosphogluconate dehydrogenase C-terminal domain-like"/>
    <property type="match status" value="1"/>
</dbReference>
<dbReference type="SUPFAM" id="SSF51735">
    <property type="entry name" value="NAD(P)-binding Rossmann-fold domains"/>
    <property type="match status" value="1"/>
</dbReference>
<dbReference type="PROSITE" id="PS00974">
    <property type="entry name" value="MANNITOL_DHGENASE"/>
    <property type="match status" value="1"/>
</dbReference>
<evidence type="ECO:0000250" key="1"/>
<evidence type="ECO:0000305" key="2"/>
<gene>
    <name type="primary">mtlD</name>
</gene>
<proteinExistence type="inferred from homology"/>
<accession>Q9XBM6</accession>
<comment type="catalytic activity">
    <reaction>
        <text>D-mannitol 1-phosphate + NAD(+) = beta-D-fructose 6-phosphate + NADH + H(+)</text>
        <dbReference type="Rhea" id="RHEA:19661"/>
        <dbReference type="ChEBI" id="CHEBI:15378"/>
        <dbReference type="ChEBI" id="CHEBI:57540"/>
        <dbReference type="ChEBI" id="CHEBI:57634"/>
        <dbReference type="ChEBI" id="CHEBI:57945"/>
        <dbReference type="ChEBI" id="CHEBI:61381"/>
        <dbReference type="EC" id="1.1.1.17"/>
    </reaction>
</comment>
<comment type="similarity">
    <text evidence="2">Belongs to the mannitol dehydrogenase family.</text>
</comment>
<keyword id="KW-0520">NAD</keyword>
<keyword id="KW-0560">Oxidoreductase</keyword>
<organism>
    <name type="scientific">Klebsiella pneumoniae</name>
    <dbReference type="NCBI Taxonomy" id="573"/>
    <lineage>
        <taxon>Bacteria</taxon>
        <taxon>Pseudomonadati</taxon>
        <taxon>Pseudomonadota</taxon>
        <taxon>Gammaproteobacteria</taxon>
        <taxon>Enterobacterales</taxon>
        <taxon>Enterobacteriaceae</taxon>
        <taxon>Klebsiella/Raoultella group</taxon>
        <taxon>Klebsiella</taxon>
        <taxon>Klebsiella pneumoniae complex</taxon>
    </lineage>
</organism>